<keyword id="KW-0963">Cytoplasm</keyword>
<keyword id="KW-0269">Exonuclease</keyword>
<keyword id="KW-0378">Hydrolase</keyword>
<keyword id="KW-0540">Nuclease</keyword>
<keyword id="KW-1185">Reference proteome</keyword>
<keyword id="KW-0694">RNA-binding</keyword>
<accession>Q32GP4</accession>
<organism>
    <name type="scientific">Shigella dysenteriae serotype 1 (strain Sd197)</name>
    <dbReference type="NCBI Taxonomy" id="300267"/>
    <lineage>
        <taxon>Bacteria</taxon>
        <taxon>Pseudomonadati</taxon>
        <taxon>Pseudomonadota</taxon>
        <taxon>Gammaproteobacteria</taxon>
        <taxon>Enterobacterales</taxon>
        <taxon>Enterobacteriaceae</taxon>
        <taxon>Shigella</taxon>
    </lineage>
</organism>
<protein>
    <recommendedName>
        <fullName evidence="2">Exoribonuclease 2</fullName>
        <ecNumber evidence="2">3.1.13.1</ecNumber>
    </recommendedName>
    <alternativeName>
        <fullName evidence="2">Exoribonuclease II</fullName>
        <shortName evidence="2">RNase II</shortName>
        <shortName evidence="2">Ribonuclease II</shortName>
    </alternativeName>
</protein>
<sequence>MFQDNPLLAQLKQQLHSQTPRAEGVVKATEKGFGFLEVDAQKSYFIPPPQMKKVMHGDRIIAVIHSEKERESAEPEELVEPFLTRFVGKVQGKNDRLAIVPDHPLLKDAIPCRAARGLNHEFKEGDWAVAEMRCHPLKGDRSFYAELTQYITFGDDHFVPWWVTLARHNLEKEAPDGVATEMLDEGLVREDLTALDFVTIDSASTEDMDDALFAKALPDDKLQLIVAIADPTAWIAEGSKLDKAAKIRAFTNYLPGFNIPMLPRELSDDLCSLRANEVRPVLACRMTLSADGTIEDNIEFFAATIESKAKLVYDQVSDWLENTGDWQPESEAIAEQVRLLAQICQRRGEWRHNHALVFKDRPDYRFILGEKGEVLDIVAEPRRIANRIVEEAMIAANICAARILRDKLGFGIYNVHMGFDPANADALAALLKTHGLHVDAEEVLTLDGFCKLRRELDAQPTGFLDSRIRRFQSFAEISTEPGPHFGLGLEAYATWTSPIRKYGDMINHRLLKAVIKGETATRPQDEITVQMAERRRLNRMAERDVGDWLYARFLKDKAGTDTRFAAEIVDISRGGMRVRLVDNGAIAFIPAPFLHAVRDELVCSQENGTVQIKGETVYKVTDVIDVTIAEVRMETRSIIARPVA</sequence>
<gene>
    <name evidence="2" type="primary">rnb</name>
    <name type="ordered locus">SDY_1366</name>
</gene>
<proteinExistence type="inferred from homology"/>
<dbReference type="EC" id="3.1.13.1" evidence="2"/>
<dbReference type="EMBL" id="CP000034">
    <property type="protein sequence ID" value="ABB61511.1"/>
    <property type="molecule type" value="Genomic_DNA"/>
</dbReference>
<dbReference type="RefSeq" id="WP_000484963.1">
    <property type="nucleotide sequence ID" value="NC_007606.1"/>
</dbReference>
<dbReference type="RefSeq" id="YP_403002.1">
    <property type="nucleotide sequence ID" value="NC_007606.1"/>
</dbReference>
<dbReference type="SMR" id="Q32GP4"/>
<dbReference type="STRING" id="300267.SDY_1366"/>
<dbReference type="EnsemblBacteria" id="ABB61511">
    <property type="protein sequence ID" value="ABB61511"/>
    <property type="gene ID" value="SDY_1366"/>
</dbReference>
<dbReference type="KEGG" id="sdy:SDY_1366"/>
<dbReference type="PATRIC" id="fig|300267.13.peg.1619"/>
<dbReference type="HOGENOM" id="CLU_002333_7_3_6"/>
<dbReference type="Proteomes" id="UP000002716">
    <property type="component" value="Chromosome"/>
</dbReference>
<dbReference type="GO" id="GO:0005829">
    <property type="term" value="C:cytosol"/>
    <property type="evidence" value="ECO:0007669"/>
    <property type="project" value="UniProtKB-ARBA"/>
</dbReference>
<dbReference type="GO" id="GO:0008859">
    <property type="term" value="F:exoribonuclease II activity"/>
    <property type="evidence" value="ECO:0007669"/>
    <property type="project" value="UniProtKB-UniRule"/>
</dbReference>
<dbReference type="GO" id="GO:0003723">
    <property type="term" value="F:RNA binding"/>
    <property type="evidence" value="ECO:0007669"/>
    <property type="project" value="UniProtKB-KW"/>
</dbReference>
<dbReference type="GO" id="GO:0006402">
    <property type="term" value="P:mRNA catabolic process"/>
    <property type="evidence" value="ECO:0007669"/>
    <property type="project" value="UniProtKB-UniRule"/>
</dbReference>
<dbReference type="FunFam" id="2.40.50.140:FF:000079">
    <property type="entry name" value="Exoribonuclease 2"/>
    <property type="match status" value="1"/>
</dbReference>
<dbReference type="FunFam" id="2.40.50.140:FF:000081">
    <property type="entry name" value="Exoribonuclease 2"/>
    <property type="match status" value="1"/>
</dbReference>
<dbReference type="FunFam" id="2.40.50.640:FF:000001">
    <property type="entry name" value="Exoribonuclease 2"/>
    <property type="match status" value="1"/>
</dbReference>
<dbReference type="Gene3D" id="2.40.50.640">
    <property type="match status" value="1"/>
</dbReference>
<dbReference type="Gene3D" id="2.40.50.140">
    <property type="entry name" value="Nucleic acid-binding proteins"/>
    <property type="match status" value="2"/>
</dbReference>
<dbReference type="HAMAP" id="MF_01036">
    <property type="entry name" value="RNase_II"/>
    <property type="match status" value="1"/>
</dbReference>
<dbReference type="InterPro" id="IPR011129">
    <property type="entry name" value="CSD"/>
</dbReference>
<dbReference type="InterPro" id="IPR012340">
    <property type="entry name" value="NA-bd_OB-fold"/>
</dbReference>
<dbReference type="InterPro" id="IPR013223">
    <property type="entry name" value="RNase_B_OB_dom"/>
</dbReference>
<dbReference type="InterPro" id="IPR011804">
    <property type="entry name" value="RNase_II"/>
</dbReference>
<dbReference type="InterPro" id="IPR001900">
    <property type="entry name" value="RNase_II/R"/>
</dbReference>
<dbReference type="InterPro" id="IPR022966">
    <property type="entry name" value="RNase_II/R_CS"/>
</dbReference>
<dbReference type="InterPro" id="IPR004476">
    <property type="entry name" value="RNase_II/RNase_R"/>
</dbReference>
<dbReference type="InterPro" id="IPR050180">
    <property type="entry name" value="RNR_Ribonuclease"/>
</dbReference>
<dbReference type="InterPro" id="IPR003029">
    <property type="entry name" value="S1_domain"/>
</dbReference>
<dbReference type="NCBIfam" id="TIGR00358">
    <property type="entry name" value="3_prime_RNase"/>
    <property type="match status" value="1"/>
</dbReference>
<dbReference type="NCBIfam" id="NF003455">
    <property type="entry name" value="PRK05054.1"/>
    <property type="match status" value="1"/>
</dbReference>
<dbReference type="NCBIfam" id="TIGR02062">
    <property type="entry name" value="RNase_B"/>
    <property type="match status" value="1"/>
</dbReference>
<dbReference type="PANTHER" id="PTHR23355:SF37">
    <property type="entry name" value="EXORIBONUCLEASE 2"/>
    <property type="match status" value="1"/>
</dbReference>
<dbReference type="PANTHER" id="PTHR23355">
    <property type="entry name" value="RIBONUCLEASE"/>
    <property type="match status" value="1"/>
</dbReference>
<dbReference type="Pfam" id="PF08206">
    <property type="entry name" value="OB_RNB"/>
    <property type="match status" value="1"/>
</dbReference>
<dbReference type="Pfam" id="PF00773">
    <property type="entry name" value="RNB"/>
    <property type="match status" value="1"/>
</dbReference>
<dbReference type="Pfam" id="PF00575">
    <property type="entry name" value="S1"/>
    <property type="match status" value="1"/>
</dbReference>
<dbReference type="SMART" id="SM00357">
    <property type="entry name" value="CSP"/>
    <property type="match status" value="1"/>
</dbReference>
<dbReference type="SMART" id="SM00955">
    <property type="entry name" value="RNB"/>
    <property type="match status" value="1"/>
</dbReference>
<dbReference type="SUPFAM" id="SSF50249">
    <property type="entry name" value="Nucleic acid-binding proteins"/>
    <property type="match status" value="4"/>
</dbReference>
<dbReference type="PROSITE" id="PS01175">
    <property type="entry name" value="RIBONUCLEASE_II"/>
    <property type="match status" value="1"/>
</dbReference>
<name>RNB_SHIDS</name>
<reference key="1">
    <citation type="journal article" date="2005" name="Nucleic Acids Res.">
        <title>Genome dynamics and diversity of Shigella species, the etiologic agents of bacillary dysentery.</title>
        <authorList>
            <person name="Yang F."/>
            <person name="Yang J."/>
            <person name="Zhang X."/>
            <person name="Chen L."/>
            <person name="Jiang Y."/>
            <person name="Yan Y."/>
            <person name="Tang X."/>
            <person name="Wang J."/>
            <person name="Xiong Z."/>
            <person name="Dong J."/>
            <person name="Xue Y."/>
            <person name="Zhu Y."/>
            <person name="Xu X."/>
            <person name="Sun L."/>
            <person name="Chen S."/>
            <person name="Nie H."/>
            <person name="Peng J."/>
            <person name="Xu J."/>
            <person name="Wang Y."/>
            <person name="Yuan Z."/>
            <person name="Wen Y."/>
            <person name="Yao Z."/>
            <person name="Shen Y."/>
            <person name="Qiang B."/>
            <person name="Hou Y."/>
            <person name="Yu J."/>
            <person name="Jin Q."/>
        </authorList>
    </citation>
    <scope>NUCLEOTIDE SEQUENCE [LARGE SCALE GENOMIC DNA]</scope>
    <source>
        <strain>Sd197</strain>
    </source>
</reference>
<evidence type="ECO:0000255" key="1"/>
<evidence type="ECO:0000255" key="2">
    <source>
        <dbReference type="HAMAP-Rule" id="MF_01036"/>
    </source>
</evidence>
<feature type="chain" id="PRO_1000063899" description="Exoribonuclease 2">
    <location>
        <begin position="1"/>
        <end position="644"/>
    </location>
</feature>
<feature type="domain" description="RNB" evidence="1">
    <location>
        <begin position="189"/>
        <end position="516"/>
    </location>
</feature>
<feature type="domain" description="S1 motif" evidence="2">
    <location>
        <begin position="561"/>
        <end position="643"/>
    </location>
</feature>
<comment type="function">
    <text evidence="2">Involved in mRNA degradation. Hydrolyzes single-stranded polyribonucleotides processively in the 3' to 5' direction.</text>
</comment>
<comment type="catalytic activity">
    <reaction evidence="2">
        <text>Exonucleolytic cleavage in the 3'- to 5'-direction to yield nucleoside 5'-phosphates.</text>
        <dbReference type="EC" id="3.1.13.1"/>
    </reaction>
</comment>
<comment type="subcellular location">
    <subcellularLocation>
        <location evidence="2">Cytoplasm</location>
    </subcellularLocation>
</comment>
<comment type="similarity">
    <text evidence="2">Belongs to the RNR ribonuclease family. RNase II subfamily.</text>
</comment>